<accession>C6DQZ2</accession>
<feature type="chain" id="PRO_0000412898" description="Maltokinase">
    <location>
        <begin position="1"/>
        <end position="455"/>
    </location>
</feature>
<organism>
    <name type="scientific">Mycobacterium tuberculosis (strain KZN 1435 / MDR)</name>
    <dbReference type="NCBI Taxonomy" id="478434"/>
    <lineage>
        <taxon>Bacteria</taxon>
        <taxon>Bacillati</taxon>
        <taxon>Actinomycetota</taxon>
        <taxon>Actinomycetes</taxon>
        <taxon>Mycobacteriales</taxon>
        <taxon>Mycobacteriaceae</taxon>
        <taxon>Mycobacterium</taxon>
        <taxon>Mycobacterium tuberculosis complex</taxon>
    </lineage>
</organism>
<reference key="1">
    <citation type="submission" date="2009-07" db="EMBL/GenBank/DDBJ databases">
        <title>The genome sequence of Mycobacterium tuberculosis strain KZN 1435.</title>
        <authorList>
            <person name="Murray M."/>
            <person name="Pillay M."/>
            <person name="Borowsky M.L."/>
            <person name="Young S.K."/>
            <person name="Zeng Q."/>
            <person name="Koehrsen M."/>
            <person name="Alvarado L."/>
            <person name="Berlin A.M."/>
            <person name="Borenstein D."/>
            <person name="Chen Z."/>
            <person name="Engels R."/>
            <person name="Freedman E."/>
            <person name="Gellesch M."/>
            <person name="Goldberg J."/>
            <person name="Griggs A."/>
            <person name="Gujja S."/>
            <person name="Heiman D.I."/>
            <person name="Hepburn T.A."/>
            <person name="Howarth C."/>
            <person name="Jen D."/>
            <person name="Larson L."/>
            <person name="Lewis B."/>
            <person name="Mehta T."/>
            <person name="Park D."/>
            <person name="Pearson M."/>
            <person name="Roberts A."/>
            <person name="Saif S."/>
            <person name="Shea T.D."/>
            <person name="Shenoy N."/>
            <person name="Sisk P."/>
            <person name="Stolte C."/>
            <person name="Sykes S.N."/>
            <person name="Walk T."/>
            <person name="White J."/>
            <person name="Yandava C."/>
            <person name="Haas B."/>
            <person name="Nusbaum C."/>
            <person name="Galagan J."/>
            <person name="Birren B."/>
        </authorList>
    </citation>
    <scope>NUCLEOTIDE SEQUENCE [LARGE SCALE GENOMIC DNA]</scope>
    <source>
        <strain>KZN 1435 / MDR</strain>
    </source>
</reference>
<dbReference type="EC" id="2.7.1.175"/>
<dbReference type="EMBL" id="CP001658">
    <property type="protein sequence ID" value="ACT23152.1"/>
    <property type="molecule type" value="Genomic_DNA"/>
</dbReference>
<dbReference type="RefSeq" id="WP_003899824.1">
    <property type="nucleotide sequence ID" value="NZ_KK341220.1"/>
</dbReference>
<dbReference type="SMR" id="C6DQZ2"/>
<dbReference type="KEGG" id="mtb:TBMG_00128"/>
<dbReference type="PATRIC" id="fig|478434.13.peg.4136"/>
<dbReference type="HOGENOM" id="CLU_029675_0_0_11"/>
<dbReference type="UniPathway" id="UPA00164"/>
<dbReference type="GO" id="GO:0005524">
    <property type="term" value="F:ATP binding"/>
    <property type="evidence" value="ECO:0007669"/>
    <property type="project" value="UniProtKB-KW"/>
</dbReference>
<dbReference type="GO" id="GO:0016301">
    <property type="term" value="F:kinase activity"/>
    <property type="evidence" value="ECO:0007669"/>
    <property type="project" value="UniProtKB-KW"/>
</dbReference>
<dbReference type="GO" id="GO:0046835">
    <property type="term" value="P:carbohydrate phosphorylation"/>
    <property type="evidence" value="ECO:0000250"/>
    <property type="project" value="UniProtKB"/>
</dbReference>
<dbReference type="GO" id="GO:0005978">
    <property type="term" value="P:glycogen biosynthetic process"/>
    <property type="evidence" value="ECO:0007669"/>
    <property type="project" value="UniProtKB-UniPathway"/>
</dbReference>
<dbReference type="GO" id="GO:0005992">
    <property type="term" value="P:trehalose biosynthetic process"/>
    <property type="evidence" value="ECO:0000250"/>
    <property type="project" value="UniProtKB"/>
</dbReference>
<dbReference type="FunFam" id="3.90.1200.10:FF:000010">
    <property type="entry name" value="Maltokinase"/>
    <property type="match status" value="1"/>
</dbReference>
<dbReference type="Gene3D" id="3.90.1200.10">
    <property type="match status" value="1"/>
</dbReference>
<dbReference type="InterPro" id="IPR011009">
    <property type="entry name" value="Kinase-like_dom_sf"/>
</dbReference>
<dbReference type="InterPro" id="IPR040999">
    <property type="entry name" value="Mak_N_cap"/>
</dbReference>
<dbReference type="Pfam" id="PF18085">
    <property type="entry name" value="Mak_N_cap"/>
    <property type="match status" value="1"/>
</dbReference>
<dbReference type="SUPFAM" id="SSF56112">
    <property type="entry name" value="Protein kinase-like (PK-like)"/>
    <property type="match status" value="1"/>
</dbReference>
<proteinExistence type="inferred from homology"/>
<gene>
    <name type="primary">mak</name>
    <name type="ordered locus">TBMG_00128</name>
</gene>
<protein>
    <recommendedName>
        <fullName>Maltokinase</fullName>
        <shortName>MaK</shortName>
        <ecNumber>2.7.1.175</ecNumber>
    </recommendedName>
    <alternativeName>
        <fullName>Maltose-1-phosphate synthase</fullName>
    </alternativeName>
</protein>
<evidence type="ECO:0000250" key="1"/>
<evidence type="ECO:0000305" key="2"/>
<comment type="function">
    <text evidence="1">Catalyzes the ATP-dependent phosphorylation of maltose to maltose 1-phosphate. Is involved in a branched alpha-glucan biosynthetic pathway from trehalose, together with TreS, GlgE and GlgB (By similarity).</text>
</comment>
<comment type="catalytic activity">
    <reaction>
        <text>D-maltose + ATP = alpha-maltose 1-phosphate + ADP + H(+)</text>
        <dbReference type="Rhea" id="RHEA:31915"/>
        <dbReference type="ChEBI" id="CHEBI:15378"/>
        <dbReference type="ChEBI" id="CHEBI:17306"/>
        <dbReference type="ChEBI" id="CHEBI:30616"/>
        <dbReference type="ChEBI" id="CHEBI:63576"/>
        <dbReference type="ChEBI" id="CHEBI:456216"/>
        <dbReference type="EC" id="2.7.1.175"/>
    </reaction>
</comment>
<comment type="pathway">
    <text>Glycan biosynthesis; glycogen biosynthesis.</text>
</comment>
<comment type="subunit">
    <text evidence="1">Monomer.</text>
</comment>
<comment type="similarity">
    <text evidence="2">Belongs to the aminoglycoside phosphotransferase family.</text>
</comment>
<name>MAK_MYCTK</name>
<keyword id="KW-0067">ATP-binding</keyword>
<keyword id="KW-0119">Carbohydrate metabolism</keyword>
<keyword id="KW-0320">Glycogen biosynthesis</keyword>
<keyword id="KW-0321">Glycogen metabolism</keyword>
<keyword id="KW-0418">Kinase</keyword>
<keyword id="KW-0547">Nucleotide-binding</keyword>
<keyword id="KW-0808">Transferase</keyword>
<sequence>MTRSDTLATKLPWSDWLPRQRWYAGRNRELATVKPGVVVALRHNLDLVLVDVTYTDGATERYQVLVGWDFEPASEYGTKAAIGVADDRTGFDALYDVAGPQFLLSLIVSSAVCGTSTGEVTFTREPDVELPFAAQPRVCDAEQSNTSVIFDRRAILKVFRRVSSGINPDIELNRVLTRAGNPHVARLLGAYQFGRPNRSPTDALAYALGMVTEYEANAAEGWAMATASVRDLFAEGDLYAHEVGGDFAGESYRLGEAVASVHATLADSLGTAQATFPVDRMLARLSSTVAVVPELREYAPTIEQQFQKLAAEAITVQRVHGDLHLGQVLRTPESWLLIDFEGEPGQPLDERRAPDSPLRDVAGVLRSFEYAAYGPLVDQATDKQLAARAREWVERNRAAFCDGYAVASGIDPRDSALLLGAYELDKAVYETGYETRHRPGWLPIPLRSIARLTAS</sequence>